<name>GBG5_HUMAN</name>
<proteinExistence type="evidence at protein level"/>
<dbReference type="EMBL" id="AF085709">
    <property type="protein sequence ID" value="AAC72203.1"/>
    <property type="molecule type" value="Genomic_DNA"/>
</dbReference>
<dbReference type="EMBL" id="AF085708">
    <property type="protein sequence ID" value="AAC72203.1"/>
    <property type="status" value="JOINED"/>
    <property type="molecule type" value="Genomic_DNA"/>
</dbReference>
<dbReference type="EMBL" id="AF038955">
    <property type="protein sequence ID" value="AAC39869.1"/>
    <property type="molecule type" value="mRNA"/>
</dbReference>
<dbReference type="EMBL" id="AF493873">
    <property type="protein sequence ID" value="AAM12587.1"/>
    <property type="molecule type" value="mRNA"/>
</dbReference>
<dbReference type="EMBL" id="BT006823">
    <property type="protein sequence ID" value="AAP35469.1"/>
    <property type="molecule type" value="mRNA"/>
</dbReference>
<dbReference type="EMBL" id="AK312111">
    <property type="protein sequence ID" value="BAG35047.1"/>
    <property type="molecule type" value="mRNA"/>
</dbReference>
<dbReference type="EMBL" id="AL359762">
    <property type="status" value="NOT_ANNOTATED_CDS"/>
    <property type="molecule type" value="Genomic_DNA"/>
</dbReference>
<dbReference type="EMBL" id="CH471097">
    <property type="protein sequence ID" value="EAW73236.1"/>
    <property type="molecule type" value="Genomic_DNA"/>
</dbReference>
<dbReference type="EMBL" id="BC003563">
    <property type="protein sequence ID" value="AAH03563.1"/>
    <property type="molecule type" value="mRNA"/>
</dbReference>
<dbReference type="CCDS" id="CCDS696.1"/>
<dbReference type="RefSeq" id="NP_005265.1">
    <property type="nucleotide sequence ID" value="NM_005274.3"/>
</dbReference>
<dbReference type="SMR" id="P63218"/>
<dbReference type="BioGRID" id="109049">
    <property type="interactions" value="78"/>
</dbReference>
<dbReference type="CORUM" id="P63218"/>
<dbReference type="FunCoup" id="P63218">
    <property type="interactions" value="1682"/>
</dbReference>
<dbReference type="IntAct" id="P63218">
    <property type="interactions" value="50"/>
</dbReference>
<dbReference type="STRING" id="9606.ENSP00000359675"/>
<dbReference type="GlyGen" id="P63218">
    <property type="glycosylation" value="1 site, 1 O-linked glycan (1 site)"/>
</dbReference>
<dbReference type="iPTMnet" id="P63218"/>
<dbReference type="PhosphoSitePlus" id="P63218"/>
<dbReference type="SwissPalm" id="P63218"/>
<dbReference type="BioMuta" id="GNG5"/>
<dbReference type="DMDM" id="52783599"/>
<dbReference type="jPOST" id="P63218"/>
<dbReference type="MassIVE" id="P63218"/>
<dbReference type="PaxDb" id="9606-ENSP00000359675"/>
<dbReference type="PeptideAtlas" id="P63218"/>
<dbReference type="ProteomicsDB" id="57508"/>
<dbReference type="Pumba" id="P63218"/>
<dbReference type="Antibodypedia" id="33546">
    <property type="antibodies" value="138 antibodies from 26 providers"/>
</dbReference>
<dbReference type="DNASU" id="2787"/>
<dbReference type="Ensembl" id="ENST00000370641.3">
    <property type="protein sequence ID" value="ENSP00000359675.3"/>
    <property type="gene ID" value="ENSG00000174021.12"/>
</dbReference>
<dbReference type="Ensembl" id="ENST00000370645.9">
    <property type="protein sequence ID" value="ENSP00000359679.4"/>
    <property type="gene ID" value="ENSG00000174021.12"/>
</dbReference>
<dbReference type="Ensembl" id="ENST00000686161.1">
    <property type="protein sequence ID" value="ENSP00000510172.1"/>
    <property type="gene ID" value="ENSG00000174021.12"/>
</dbReference>
<dbReference type="GeneID" id="2787"/>
<dbReference type="KEGG" id="hsa:2787"/>
<dbReference type="MANE-Select" id="ENST00000370645.9">
    <property type="protein sequence ID" value="ENSP00000359679.4"/>
    <property type="RefSeq nucleotide sequence ID" value="NM_005274.3"/>
    <property type="RefSeq protein sequence ID" value="NP_005265.1"/>
</dbReference>
<dbReference type="UCSC" id="uc001djw.5">
    <property type="organism name" value="human"/>
</dbReference>
<dbReference type="AGR" id="HGNC:4408"/>
<dbReference type="CTD" id="2787"/>
<dbReference type="DisGeNET" id="2787"/>
<dbReference type="GeneCards" id="GNG5"/>
<dbReference type="HGNC" id="HGNC:4408">
    <property type="gene designation" value="GNG5"/>
</dbReference>
<dbReference type="HPA" id="ENSG00000174021">
    <property type="expression patterns" value="Low tissue specificity"/>
</dbReference>
<dbReference type="MIM" id="600874">
    <property type="type" value="gene"/>
</dbReference>
<dbReference type="neXtProt" id="NX_P63218"/>
<dbReference type="OpenTargets" id="ENSG00000174021"/>
<dbReference type="PharmGKB" id="PA28787"/>
<dbReference type="VEuPathDB" id="HostDB:ENSG00000174021"/>
<dbReference type="eggNOG" id="KOG4119">
    <property type="taxonomic scope" value="Eukaryota"/>
</dbReference>
<dbReference type="GeneTree" id="ENSGT01100000263525"/>
<dbReference type="HOGENOM" id="CLU_168377_3_0_1"/>
<dbReference type="InParanoid" id="P63218"/>
<dbReference type="OMA" id="QNALHDP"/>
<dbReference type="OrthoDB" id="6264244at2759"/>
<dbReference type="PAN-GO" id="P63218">
    <property type="GO annotations" value="3 GO annotations based on evolutionary models"/>
</dbReference>
<dbReference type="PhylomeDB" id="P63218"/>
<dbReference type="TreeFam" id="TF319909"/>
<dbReference type="PathwayCommons" id="P63218"/>
<dbReference type="Reactome" id="R-HSA-1296041">
    <property type="pathway name" value="Activation of G protein gated Potassium channels"/>
</dbReference>
<dbReference type="Reactome" id="R-HSA-163359">
    <property type="pathway name" value="Glucagon signaling in metabolic regulation"/>
</dbReference>
<dbReference type="Reactome" id="R-HSA-202040">
    <property type="pathway name" value="G-protein activation"/>
</dbReference>
<dbReference type="Reactome" id="R-HSA-381676">
    <property type="pathway name" value="Glucagon-like Peptide-1 (GLP1) regulates insulin secretion"/>
</dbReference>
<dbReference type="Reactome" id="R-HSA-392170">
    <property type="pathway name" value="ADP signalling through P2Y purinoceptor 12"/>
</dbReference>
<dbReference type="Reactome" id="R-HSA-392451">
    <property type="pathway name" value="G beta:gamma signalling through PI3Kgamma"/>
</dbReference>
<dbReference type="Reactome" id="R-HSA-392851">
    <property type="pathway name" value="Prostacyclin signalling through prostacyclin receptor"/>
</dbReference>
<dbReference type="Reactome" id="R-HSA-400042">
    <property type="pathway name" value="Adrenaline,noradrenaline inhibits insulin secretion"/>
</dbReference>
<dbReference type="Reactome" id="R-HSA-4086398">
    <property type="pathway name" value="Ca2+ pathway"/>
</dbReference>
<dbReference type="Reactome" id="R-HSA-416476">
    <property type="pathway name" value="G alpha (q) signalling events"/>
</dbReference>
<dbReference type="Reactome" id="R-HSA-416482">
    <property type="pathway name" value="G alpha (12/13) signalling events"/>
</dbReference>
<dbReference type="Reactome" id="R-HSA-418217">
    <property type="pathway name" value="G beta:gamma signalling through PLC beta"/>
</dbReference>
<dbReference type="Reactome" id="R-HSA-418555">
    <property type="pathway name" value="G alpha (s) signalling events"/>
</dbReference>
<dbReference type="Reactome" id="R-HSA-418592">
    <property type="pathway name" value="ADP signalling through P2Y purinoceptor 1"/>
</dbReference>
<dbReference type="Reactome" id="R-HSA-418594">
    <property type="pathway name" value="G alpha (i) signalling events"/>
</dbReference>
<dbReference type="Reactome" id="R-HSA-418597">
    <property type="pathway name" value="G alpha (z) signalling events"/>
</dbReference>
<dbReference type="Reactome" id="R-HSA-420092">
    <property type="pathway name" value="Glucagon-type ligand receptors"/>
</dbReference>
<dbReference type="Reactome" id="R-HSA-428930">
    <property type="pathway name" value="Thromboxane signalling through TP receptor"/>
</dbReference>
<dbReference type="Reactome" id="R-HSA-432040">
    <property type="pathway name" value="Vasopressin regulates renal water homeostasis via Aquaporins"/>
</dbReference>
<dbReference type="Reactome" id="R-HSA-456926">
    <property type="pathway name" value="Thrombin signalling through proteinase activated receptors (PARs)"/>
</dbReference>
<dbReference type="Reactome" id="R-HSA-500657">
    <property type="pathway name" value="Presynaptic function of Kainate receptors"/>
</dbReference>
<dbReference type="Reactome" id="R-HSA-6814122">
    <property type="pathway name" value="Cooperation of PDCL (PhLP1) and TRiC/CCT in G-protein beta folding"/>
</dbReference>
<dbReference type="Reactome" id="R-HSA-8964315">
    <property type="pathway name" value="G beta:gamma signalling through BTK"/>
</dbReference>
<dbReference type="Reactome" id="R-HSA-8964616">
    <property type="pathway name" value="G beta:gamma signalling through CDC42"/>
</dbReference>
<dbReference type="Reactome" id="R-HSA-9009391">
    <property type="pathway name" value="Extra-nuclear estrogen signaling"/>
</dbReference>
<dbReference type="Reactome" id="R-HSA-9634597">
    <property type="pathway name" value="GPER1 signaling"/>
</dbReference>
<dbReference type="Reactome" id="R-HSA-9660821">
    <property type="pathway name" value="ADORA2B mediated anti-inflammatory cytokines production"/>
</dbReference>
<dbReference type="Reactome" id="R-HSA-9856530">
    <property type="pathway name" value="High laminar flow shear stress activates signaling by PIEZO1 and PECAM1:CDH5:KDR in endothelial cells"/>
</dbReference>
<dbReference type="Reactome" id="R-HSA-997272">
    <property type="pathway name" value="Inhibition of voltage gated Ca2+ channels via Gbeta/gamma subunits"/>
</dbReference>
<dbReference type="SignaLink" id="P63218"/>
<dbReference type="BioGRID-ORCS" id="2787">
    <property type="hits" value="50 hits in 1060 CRISPR screens"/>
</dbReference>
<dbReference type="ChiTaRS" id="GNG5">
    <property type="organism name" value="human"/>
</dbReference>
<dbReference type="GeneWiki" id="GNG5"/>
<dbReference type="GenomeRNAi" id="2787"/>
<dbReference type="Pharos" id="P63218">
    <property type="development level" value="Tbio"/>
</dbReference>
<dbReference type="PRO" id="PR:P63218"/>
<dbReference type="Proteomes" id="UP000005640">
    <property type="component" value="Chromosome 1"/>
</dbReference>
<dbReference type="RNAct" id="P63218">
    <property type="molecule type" value="protein"/>
</dbReference>
<dbReference type="Bgee" id="ENSG00000174021">
    <property type="expression patterns" value="Expressed in mucosa of transverse colon and 96 other cell types or tissues"/>
</dbReference>
<dbReference type="GO" id="GO:0070062">
    <property type="term" value="C:extracellular exosome"/>
    <property type="evidence" value="ECO:0007005"/>
    <property type="project" value="UniProtKB"/>
</dbReference>
<dbReference type="GO" id="GO:0005834">
    <property type="term" value="C:heterotrimeric G-protein complex"/>
    <property type="evidence" value="ECO:0000318"/>
    <property type="project" value="GO_Central"/>
</dbReference>
<dbReference type="GO" id="GO:0016020">
    <property type="term" value="C:membrane"/>
    <property type="evidence" value="ECO:0007005"/>
    <property type="project" value="UniProtKB"/>
</dbReference>
<dbReference type="GO" id="GO:0005886">
    <property type="term" value="C:plasma membrane"/>
    <property type="evidence" value="ECO:0000304"/>
    <property type="project" value="Reactome"/>
</dbReference>
<dbReference type="GO" id="GO:0031681">
    <property type="term" value="F:G-protein beta-subunit binding"/>
    <property type="evidence" value="ECO:0000318"/>
    <property type="project" value="GO_Central"/>
</dbReference>
<dbReference type="GO" id="GO:0003924">
    <property type="term" value="F:GTPase activity"/>
    <property type="evidence" value="ECO:0000303"/>
    <property type="project" value="UniProtKB"/>
</dbReference>
<dbReference type="GO" id="GO:0030165">
    <property type="term" value="F:PDZ domain binding"/>
    <property type="evidence" value="ECO:0000314"/>
    <property type="project" value="MGI"/>
</dbReference>
<dbReference type="GO" id="GO:0007186">
    <property type="term" value="P:G protein-coupled receptor signaling pathway"/>
    <property type="evidence" value="ECO:0000318"/>
    <property type="project" value="GO_Central"/>
</dbReference>
<dbReference type="GO" id="GO:0007165">
    <property type="term" value="P:signal transduction"/>
    <property type="evidence" value="ECO:0000303"/>
    <property type="project" value="UniProtKB"/>
</dbReference>
<dbReference type="CDD" id="cd00068">
    <property type="entry name" value="GGL"/>
    <property type="match status" value="1"/>
</dbReference>
<dbReference type="FunFam" id="4.10.260.10:FF:000001">
    <property type="entry name" value="Guanine nucleotide-binding protein subunit gamma"/>
    <property type="match status" value="1"/>
</dbReference>
<dbReference type="Gene3D" id="4.10.260.10">
    <property type="entry name" value="Transducin (heterotrimeric G protein), gamma chain"/>
    <property type="match status" value="1"/>
</dbReference>
<dbReference type="InterPro" id="IPR015898">
    <property type="entry name" value="G-protein_gamma-like_dom"/>
</dbReference>
<dbReference type="InterPro" id="IPR036284">
    <property type="entry name" value="GGL_sf"/>
</dbReference>
<dbReference type="InterPro" id="IPR001770">
    <property type="entry name" value="Gprotein-gamma"/>
</dbReference>
<dbReference type="PANTHER" id="PTHR13809">
    <property type="entry name" value="GUANINE NUCLEOTIDE-BINDING PROTEIN GAMMA SUBUNIT"/>
    <property type="match status" value="1"/>
</dbReference>
<dbReference type="Pfam" id="PF00631">
    <property type="entry name" value="G-gamma"/>
    <property type="match status" value="1"/>
</dbReference>
<dbReference type="PRINTS" id="PR00321">
    <property type="entry name" value="GPROTEING"/>
</dbReference>
<dbReference type="SMART" id="SM01224">
    <property type="entry name" value="G_gamma"/>
    <property type="match status" value="1"/>
</dbReference>
<dbReference type="SMART" id="SM00224">
    <property type="entry name" value="GGL"/>
    <property type="match status" value="1"/>
</dbReference>
<dbReference type="SUPFAM" id="SSF48670">
    <property type="entry name" value="Transducin (heterotrimeric G protein), gamma chain"/>
    <property type="match status" value="1"/>
</dbReference>
<dbReference type="PROSITE" id="PS50058">
    <property type="entry name" value="G_PROTEIN_GAMMA"/>
    <property type="match status" value="1"/>
</dbReference>
<accession>P63218</accession>
<accession>B2R5A0</accession>
<accession>P30670</accession>
<accession>Q5VX54</accession>
<accession>Q61015</accession>
<comment type="function">
    <text>Guanine nucleotide-binding proteins (G proteins) are involved as a modulator or transducer in various transmembrane signaling systems. The beta and gamma chains are required for the GTPase activity, for replacement of GDP by GTP, and for G protein-effector interaction.</text>
</comment>
<comment type="subunit">
    <text>G proteins are composed of 3 units, alpha, beta and gamma.</text>
</comment>
<comment type="interaction">
    <interactant intactId="EBI-10220734">
        <id>P63218</id>
    </interactant>
    <interactant intactId="EBI-10187270">
        <id>Q9Y2J4-4</id>
        <label>AMOTL2</label>
    </interactant>
    <organismsDiffer>false</organismsDiffer>
    <experiments>3</experiments>
</comment>
<comment type="interaction">
    <interactant intactId="EBI-10220734">
        <id>P63218</id>
    </interactant>
    <interactant intactId="EBI-2556746">
        <id>Q9UBC2</id>
        <label>EPS15L1</label>
    </interactant>
    <organismsDiffer>false</organismsDiffer>
    <experiments>3</experiments>
</comment>
<comment type="interaction">
    <interactant intactId="EBI-10220734">
        <id>P63218</id>
    </interactant>
    <interactant intactId="EBI-357130">
        <id>P62873</id>
        <label>GNB1</label>
    </interactant>
    <organismsDiffer>false</organismsDiffer>
    <experiments>4</experiments>
</comment>
<comment type="interaction">
    <interactant intactId="EBI-10220734">
        <id>P63218</id>
    </interactant>
    <interactant intactId="EBI-618309">
        <id>Q08379</id>
        <label>GOLGA2</label>
    </interactant>
    <organismsDiffer>false</organismsDiffer>
    <experiments>3</experiments>
</comment>
<comment type="interaction">
    <interactant intactId="EBI-10220734">
        <id>P63218</id>
    </interactant>
    <interactant intactId="EBI-948001">
        <id>Q15323</id>
        <label>KRT31</label>
    </interactant>
    <organismsDiffer>false</organismsDiffer>
    <experiments>3</experiments>
</comment>
<comment type="interaction">
    <interactant intactId="EBI-10220734">
        <id>P63218</id>
    </interactant>
    <interactant intactId="EBI-10171697">
        <id>Q6A162</id>
        <label>KRT40</label>
    </interactant>
    <organismsDiffer>false</organismsDiffer>
    <experiments>3</experiments>
</comment>
<comment type="interaction">
    <interactant intactId="EBI-10220734">
        <id>P63218</id>
    </interactant>
    <interactant intactId="EBI-724076">
        <id>Q99750</id>
        <label>MDFI</label>
    </interactant>
    <organismsDiffer>false</organismsDiffer>
    <experiments>3</experiments>
</comment>
<comment type="interaction">
    <interactant intactId="EBI-10220734">
        <id>P63218</id>
    </interactant>
    <interactant intactId="EBI-359224">
        <id>Q13077</id>
        <label>TRAF1</label>
    </interactant>
    <organismsDiffer>false</organismsDiffer>
    <experiments>3</experiments>
</comment>
<comment type="subcellular location">
    <subcellularLocation>
        <location evidence="3">Cell membrane</location>
        <topology evidence="3">Lipid-anchor</topology>
        <orientation evidence="3">Cytoplasmic side</orientation>
    </subcellularLocation>
</comment>
<comment type="similarity">
    <text evidence="3">Belongs to the G protein gamma family.</text>
</comment>
<protein>
    <recommendedName>
        <fullName>Guanine nucleotide-binding protein G(I)/G(S)/G(O) subunit gamma-5</fullName>
    </recommendedName>
</protein>
<gene>
    <name type="primary">GNG5</name>
    <name type="synonym">GNGT5</name>
</gene>
<evidence type="ECO:0000250" key="1"/>
<evidence type="ECO:0000269" key="2">
    <source>
    </source>
</evidence>
<evidence type="ECO:0000305" key="3"/>
<evidence type="ECO:0007744" key="4">
    <source>
    </source>
</evidence>
<evidence type="ECO:0007744" key="5">
    <source>
    </source>
</evidence>
<evidence type="ECO:0007744" key="6">
    <source>
    </source>
</evidence>
<evidence type="ECO:0007744" key="7">
    <source>
    </source>
</evidence>
<feature type="initiator methionine" description="Removed" evidence="2 4 5 6 7">
    <location>
        <position position="1"/>
    </location>
</feature>
<feature type="chain" id="PRO_0000012627" description="Guanine nucleotide-binding protein G(I)/G(S)/G(O) subunit gamma-5">
    <location>
        <begin position="2"/>
        <end position="65"/>
    </location>
</feature>
<feature type="propeptide" id="PRO_0000012628" description="Removed in mature form" evidence="1">
    <location>
        <begin position="66"/>
        <end position="68"/>
    </location>
</feature>
<feature type="modified residue" description="N-acetylserine" evidence="2 4 5 6 7">
    <location>
        <position position="2"/>
    </location>
</feature>
<feature type="modified residue" description="Phosphoserine" evidence="5">
    <location>
        <position position="2"/>
    </location>
</feature>
<feature type="modified residue" description="Cysteine methyl ester" evidence="1">
    <location>
        <position position="65"/>
    </location>
</feature>
<feature type="lipid moiety-binding region" description="S-geranylgeranyl cysteine" evidence="1">
    <location>
        <position position="65"/>
    </location>
</feature>
<sequence length="68" mass="7318">MSGSSSVAAMKKVVQQLRLEAGLNRVKVSQAAADLKQFCLQNAQHDPLLTGVSSSTNPFRPQKVCSFL</sequence>
<reference key="1">
    <citation type="journal article" date="1998" name="Biochem. Biophys. Res. Commun.">
        <title>Structure of human G protein Ggamma5 gene GNG5.</title>
        <authorList>
            <person name="Liu B."/>
            <person name="Aronson N.N. Jr."/>
        </authorList>
    </citation>
    <scope>NUCLEOTIDE SEQUENCE [GENOMIC DNA]</scope>
</reference>
<reference key="2">
    <citation type="journal article" date="1998" name="Proc. Natl. Acad. Sci. U.S.A.">
        <title>Identification of genes expressed in human CD34(+) hematopoietic stem/progenitor cells by expressed sequence tags and efficient full-length cDNA cloning.</title>
        <authorList>
            <person name="Mao M."/>
            <person name="Fu G."/>
            <person name="Wu J.-S."/>
            <person name="Zhang Q.-H."/>
            <person name="Zhou J."/>
            <person name="Kan L.-X."/>
            <person name="Huang Q.-H."/>
            <person name="He K.-L."/>
            <person name="Gu B.-W."/>
            <person name="Han Z.-G."/>
            <person name="Shen Y."/>
            <person name="Gu J."/>
            <person name="Yu Y.-P."/>
            <person name="Xu S.-H."/>
            <person name="Wang Y.-X."/>
            <person name="Chen S.-J."/>
            <person name="Chen Z."/>
        </authorList>
    </citation>
    <scope>NUCLEOTIDE SEQUENCE [LARGE SCALE MRNA]</scope>
    <source>
        <tissue>Umbilical cord blood</tissue>
    </source>
</reference>
<reference key="3">
    <citation type="submission" date="2002-03" db="EMBL/GenBank/DDBJ databases">
        <title>cDNA clones of human proteins involved in signal transduction sequenced by the Guthrie cDNA resource center (www.cdna.org).</title>
        <authorList>
            <person name="Puhl H.L. III"/>
            <person name="Ikeda S.R."/>
            <person name="Aronstam R.S."/>
        </authorList>
    </citation>
    <scope>NUCLEOTIDE SEQUENCE [LARGE SCALE MRNA]</scope>
</reference>
<reference key="4">
    <citation type="submission" date="2003-05" db="EMBL/GenBank/DDBJ databases">
        <title>Cloning of human full-length CDSs in BD Creator(TM) system donor vector.</title>
        <authorList>
            <person name="Kalnine N."/>
            <person name="Chen X."/>
            <person name="Rolfs A."/>
            <person name="Halleck A."/>
            <person name="Hines L."/>
            <person name="Eisenstein S."/>
            <person name="Koundinya M."/>
            <person name="Raphael J."/>
            <person name="Moreira D."/>
            <person name="Kelley T."/>
            <person name="LaBaer J."/>
            <person name="Lin Y."/>
            <person name="Phelan M."/>
            <person name="Farmer A."/>
        </authorList>
    </citation>
    <scope>NUCLEOTIDE SEQUENCE [LARGE SCALE MRNA]</scope>
</reference>
<reference key="5">
    <citation type="journal article" date="2004" name="Nat. Genet.">
        <title>Complete sequencing and characterization of 21,243 full-length human cDNAs.</title>
        <authorList>
            <person name="Ota T."/>
            <person name="Suzuki Y."/>
            <person name="Nishikawa T."/>
            <person name="Otsuki T."/>
            <person name="Sugiyama T."/>
            <person name="Irie R."/>
            <person name="Wakamatsu A."/>
            <person name="Hayashi K."/>
            <person name="Sato H."/>
            <person name="Nagai K."/>
            <person name="Kimura K."/>
            <person name="Makita H."/>
            <person name="Sekine M."/>
            <person name="Obayashi M."/>
            <person name="Nishi T."/>
            <person name="Shibahara T."/>
            <person name="Tanaka T."/>
            <person name="Ishii S."/>
            <person name="Yamamoto J."/>
            <person name="Saito K."/>
            <person name="Kawai Y."/>
            <person name="Isono Y."/>
            <person name="Nakamura Y."/>
            <person name="Nagahari K."/>
            <person name="Murakami K."/>
            <person name="Yasuda T."/>
            <person name="Iwayanagi T."/>
            <person name="Wagatsuma M."/>
            <person name="Shiratori A."/>
            <person name="Sudo H."/>
            <person name="Hosoiri T."/>
            <person name="Kaku Y."/>
            <person name="Kodaira H."/>
            <person name="Kondo H."/>
            <person name="Sugawara M."/>
            <person name="Takahashi M."/>
            <person name="Kanda K."/>
            <person name="Yokoi T."/>
            <person name="Furuya T."/>
            <person name="Kikkawa E."/>
            <person name="Omura Y."/>
            <person name="Abe K."/>
            <person name="Kamihara K."/>
            <person name="Katsuta N."/>
            <person name="Sato K."/>
            <person name="Tanikawa M."/>
            <person name="Yamazaki M."/>
            <person name="Ninomiya K."/>
            <person name="Ishibashi T."/>
            <person name="Yamashita H."/>
            <person name="Murakawa K."/>
            <person name="Fujimori K."/>
            <person name="Tanai H."/>
            <person name="Kimata M."/>
            <person name="Watanabe M."/>
            <person name="Hiraoka S."/>
            <person name="Chiba Y."/>
            <person name="Ishida S."/>
            <person name="Ono Y."/>
            <person name="Takiguchi S."/>
            <person name="Watanabe S."/>
            <person name="Yosida M."/>
            <person name="Hotuta T."/>
            <person name="Kusano J."/>
            <person name="Kanehori K."/>
            <person name="Takahashi-Fujii A."/>
            <person name="Hara H."/>
            <person name="Tanase T.-O."/>
            <person name="Nomura Y."/>
            <person name="Togiya S."/>
            <person name="Komai F."/>
            <person name="Hara R."/>
            <person name="Takeuchi K."/>
            <person name="Arita M."/>
            <person name="Imose N."/>
            <person name="Musashino K."/>
            <person name="Yuuki H."/>
            <person name="Oshima A."/>
            <person name="Sasaki N."/>
            <person name="Aotsuka S."/>
            <person name="Yoshikawa Y."/>
            <person name="Matsunawa H."/>
            <person name="Ichihara T."/>
            <person name="Shiohata N."/>
            <person name="Sano S."/>
            <person name="Moriya S."/>
            <person name="Momiyama H."/>
            <person name="Satoh N."/>
            <person name="Takami S."/>
            <person name="Terashima Y."/>
            <person name="Suzuki O."/>
            <person name="Nakagawa S."/>
            <person name="Senoh A."/>
            <person name="Mizoguchi H."/>
            <person name="Goto Y."/>
            <person name="Shimizu F."/>
            <person name="Wakebe H."/>
            <person name="Hishigaki H."/>
            <person name="Watanabe T."/>
            <person name="Sugiyama A."/>
            <person name="Takemoto M."/>
            <person name="Kawakami B."/>
            <person name="Yamazaki M."/>
            <person name="Watanabe K."/>
            <person name="Kumagai A."/>
            <person name="Itakura S."/>
            <person name="Fukuzumi Y."/>
            <person name="Fujimori Y."/>
            <person name="Komiyama M."/>
            <person name="Tashiro H."/>
            <person name="Tanigami A."/>
            <person name="Fujiwara T."/>
            <person name="Ono T."/>
            <person name="Yamada K."/>
            <person name="Fujii Y."/>
            <person name="Ozaki K."/>
            <person name="Hirao M."/>
            <person name="Ohmori Y."/>
            <person name="Kawabata A."/>
            <person name="Hikiji T."/>
            <person name="Kobatake N."/>
            <person name="Inagaki H."/>
            <person name="Ikema Y."/>
            <person name="Okamoto S."/>
            <person name="Okitani R."/>
            <person name="Kawakami T."/>
            <person name="Noguchi S."/>
            <person name="Itoh T."/>
            <person name="Shigeta K."/>
            <person name="Senba T."/>
            <person name="Matsumura K."/>
            <person name="Nakajima Y."/>
            <person name="Mizuno T."/>
            <person name="Morinaga M."/>
            <person name="Sasaki M."/>
            <person name="Togashi T."/>
            <person name="Oyama M."/>
            <person name="Hata H."/>
            <person name="Watanabe M."/>
            <person name="Komatsu T."/>
            <person name="Mizushima-Sugano J."/>
            <person name="Satoh T."/>
            <person name="Shirai Y."/>
            <person name="Takahashi Y."/>
            <person name="Nakagawa K."/>
            <person name="Okumura K."/>
            <person name="Nagase T."/>
            <person name="Nomura N."/>
            <person name="Kikuchi H."/>
            <person name="Masuho Y."/>
            <person name="Yamashita R."/>
            <person name="Nakai K."/>
            <person name="Yada T."/>
            <person name="Nakamura Y."/>
            <person name="Ohara O."/>
            <person name="Isogai T."/>
            <person name="Sugano S."/>
        </authorList>
    </citation>
    <scope>NUCLEOTIDE SEQUENCE [LARGE SCALE MRNA]</scope>
    <source>
        <tissue>Testis</tissue>
    </source>
</reference>
<reference key="6">
    <citation type="journal article" date="2006" name="Nature">
        <title>The DNA sequence and biological annotation of human chromosome 1.</title>
        <authorList>
            <person name="Gregory S.G."/>
            <person name="Barlow K.F."/>
            <person name="McLay K.E."/>
            <person name="Kaul R."/>
            <person name="Swarbreck D."/>
            <person name="Dunham A."/>
            <person name="Scott C.E."/>
            <person name="Howe K.L."/>
            <person name="Woodfine K."/>
            <person name="Spencer C.C.A."/>
            <person name="Jones M.C."/>
            <person name="Gillson C."/>
            <person name="Searle S."/>
            <person name="Zhou Y."/>
            <person name="Kokocinski F."/>
            <person name="McDonald L."/>
            <person name="Evans R."/>
            <person name="Phillips K."/>
            <person name="Atkinson A."/>
            <person name="Cooper R."/>
            <person name="Jones C."/>
            <person name="Hall R.E."/>
            <person name="Andrews T.D."/>
            <person name="Lloyd C."/>
            <person name="Ainscough R."/>
            <person name="Almeida J.P."/>
            <person name="Ambrose K.D."/>
            <person name="Anderson F."/>
            <person name="Andrew R.W."/>
            <person name="Ashwell R.I.S."/>
            <person name="Aubin K."/>
            <person name="Babbage A.K."/>
            <person name="Bagguley C.L."/>
            <person name="Bailey J."/>
            <person name="Beasley H."/>
            <person name="Bethel G."/>
            <person name="Bird C.P."/>
            <person name="Bray-Allen S."/>
            <person name="Brown J.Y."/>
            <person name="Brown A.J."/>
            <person name="Buckley D."/>
            <person name="Burton J."/>
            <person name="Bye J."/>
            <person name="Carder C."/>
            <person name="Chapman J.C."/>
            <person name="Clark S.Y."/>
            <person name="Clarke G."/>
            <person name="Clee C."/>
            <person name="Cobley V."/>
            <person name="Collier R.E."/>
            <person name="Corby N."/>
            <person name="Coville G.J."/>
            <person name="Davies J."/>
            <person name="Deadman R."/>
            <person name="Dunn M."/>
            <person name="Earthrowl M."/>
            <person name="Ellington A.G."/>
            <person name="Errington H."/>
            <person name="Frankish A."/>
            <person name="Frankland J."/>
            <person name="French L."/>
            <person name="Garner P."/>
            <person name="Garnett J."/>
            <person name="Gay L."/>
            <person name="Ghori M.R.J."/>
            <person name="Gibson R."/>
            <person name="Gilby L.M."/>
            <person name="Gillett W."/>
            <person name="Glithero R.J."/>
            <person name="Grafham D.V."/>
            <person name="Griffiths C."/>
            <person name="Griffiths-Jones S."/>
            <person name="Grocock R."/>
            <person name="Hammond S."/>
            <person name="Harrison E.S.I."/>
            <person name="Hart E."/>
            <person name="Haugen E."/>
            <person name="Heath P.D."/>
            <person name="Holmes S."/>
            <person name="Holt K."/>
            <person name="Howden P.J."/>
            <person name="Hunt A.R."/>
            <person name="Hunt S.E."/>
            <person name="Hunter G."/>
            <person name="Isherwood J."/>
            <person name="James R."/>
            <person name="Johnson C."/>
            <person name="Johnson D."/>
            <person name="Joy A."/>
            <person name="Kay M."/>
            <person name="Kershaw J.K."/>
            <person name="Kibukawa M."/>
            <person name="Kimberley A.M."/>
            <person name="King A."/>
            <person name="Knights A.J."/>
            <person name="Lad H."/>
            <person name="Laird G."/>
            <person name="Lawlor S."/>
            <person name="Leongamornlert D.A."/>
            <person name="Lloyd D.M."/>
            <person name="Loveland J."/>
            <person name="Lovell J."/>
            <person name="Lush M.J."/>
            <person name="Lyne R."/>
            <person name="Martin S."/>
            <person name="Mashreghi-Mohammadi M."/>
            <person name="Matthews L."/>
            <person name="Matthews N.S.W."/>
            <person name="McLaren S."/>
            <person name="Milne S."/>
            <person name="Mistry S."/>
            <person name="Moore M.J.F."/>
            <person name="Nickerson T."/>
            <person name="O'Dell C.N."/>
            <person name="Oliver K."/>
            <person name="Palmeiri A."/>
            <person name="Palmer S.A."/>
            <person name="Parker A."/>
            <person name="Patel D."/>
            <person name="Pearce A.V."/>
            <person name="Peck A.I."/>
            <person name="Pelan S."/>
            <person name="Phelps K."/>
            <person name="Phillimore B.J."/>
            <person name="Plumb R."/>
            <person name="Rajan J."/>
            <person name="Raymond C."/>
            <person name="Rouse G."/>
            <person name="Saenphimmachak C."/>
            <person name="Sehra H.K."/>
            <person name="Sheridan E."/>
            <person name="Shownkeen R."/>
            <person name="Sims S."/>
            <person name="Skuce C.D."/>
            <person name="Smith M."/>
            <person name="Steward C."/>
            <person name="Subramanian S."/>
            <person name="Sycamore N."/>
            <person name="Tracey A."/>
            <person name="Tromans A."/>
            <person name="Van Helmond Z."/>
            <person name="Wall M."/>
            <person name="Wallis J.M."/>
            <person name="White S."/>
            <person name="Whitehead S.L."/>
            <person name="Wilkinson J.E."/>
            <person name="Willey D.L."/>
            <person name="Williams H."/>
            <person name="Wilming L."/>
            <person name="Wray P.W."/>
            <person name="Wu Z."/>
            <person name="Coulson A."/>
            <person name="Vaudin M."/>
            <person name="Sulston J.E."/>
            <person name="Durbin R.M."/>
            <person name="Hubbard T."/>
            <person name="Wooster R."/>
            <person name="Dunham I."/>
            <person name="Carter N.P."/>
            <person name="McVean G."/>
            <person name="Ross M.T."/>
            <person name="Harrow J."/>
            <person name="Olson M.V."/>
            <person name="Beck S."/>
            <person name="Rogers J."/>
            <person name="Bentley D.R."/>
        </authorList>
    </citation>
    <scope>NUCLEOTIDE SEQUENCE [LARGE SCALE GENOMIC DNA]</scope>
</reference>
<reference key="7">
    <citation type="submission" date="2005-09" db="EMBL/GenBank/DDBJ databases">
        <authorList>
            <person name="Mural R.J."/>
            <person name="Istrail S."/>
            <person name="Sutton G.G."/>
            <person name="Florea L."/>
            <person name="Halpern A.L."/>
            <person name="Mobarry C.M."/>
            <person name="Lippert R."/>
            <person name="Walenz B."/>
            <person name="Shatkay H."/>
            <person name="Dew I."/>
            <person name="Miller J.R."/>
            <person name="Flanigan M.J."/>
            <person name="Edwards N.J."/>
            <person name="Bolanos R."/>
            <person name="Fasulo D."/>
            <person name="Halldorsson B.V."/>
            <person name="Hannenhalli S."/>
            <person name="Turner R."/>
            <person name="Yooseph S."/>
            <person name="Lu F."/>
            <person name="Nusskern D.R."/>
            <person name="Shue B.C."/>
            <person name="Zheng X.H."/>
            <person name="Zhong F."/>
            <person name="Delcher A.L."/>
            <person name="Huson D.H."/>
            <person name="Kravitz S.A."/>
            <person name="Mouchard L."/>
            <person name="Reinert K."/>
            <person name="Remington K.A."/>
            <person name="Clark A.G."/>
            <person name="Waterman M.S."/>
            <person name="Eichler E.E."/>
            <person name="Adams M.D."/>
            <person name="Hunkapiller M.W."/>
            <person name="Myers E.W."/>
            <person name="Venter J.C."/>
        </authorList>
    </citation>
    <scope>NUCLEOTIDE SEQUENCE [LARGE SCALE GENOMIC DNA]</scope>
</reference>
<reference key="8">
    <citation type="journal article" date="2004" name="Genome Res.">
        <title>The status, quality, and expansion of the NIH full-length cDNA project: the Mammalian Gene Collection (MGC).</title>
        <authorList>
            <consortium name="The MGC Project Team"/>
        </authorList>
    </citation>
    <scope>NUCLEOTIDE SEQUENCE [LARGE SCALE MRNA]</scope>
    <source>
        <tissue>Brain</tissue>
    </source>
</reference>
<reference key="9">
    <citation type="journal article" date="2003" name="Nat. Biotechnol.">
        <title>Exploring proteomes and analyzing protein processing by mass spectrometric identification of sorted N-terminal peptides.</title>
        <authorList>
            <person name="Gevaert K."/>
            <person name="Goethals M."/>
            <person name="Martens L."/>
            <person name="Van Damme J."/>
            <person name="Staes A."/>
            <person name="Thomas G.R."/>
            <person name="Vandekerckhove J."/>
        </authorList>
    </citation>
    <scope>PROTEIN SEQUENCE OF 2-18</scope>
    <scope>ACETYLATION AT SER-2</scope>
    <source>
        <tissue>Platelet</tissue>
    </source>
</reference>
<reference key="10">
    <citation type="journal article" date="2009" name="Anal. Chem.">
        <title>Lys-N and trypsin cover complementary parts of the phosphoproteome in a refined SCX-based approach.</title>
        <authorList>
            <person name="Gauci S."/>
            <person name="Helbig A.O."/>
            <person name="Slijper M."/>
            <person name="Krijgsveld J."/>
            <person name="Heck A.J."/>
            <person name="Mohammed S."/>
        </authorList>
    </citation>
    <scope>ACETYLATION [LARGE SCALE ANALYSIS] AT SER-2</scope>
    <scope>CLEAVAGE OF INITIATOR METHIONINE [LARGE SCALE ANALYSIS]</scope>
    <scope>IDENTIFICATION BY MASS SPECTROMETRY [LARGE SCALE ANALYSIS]</scope>
</reference>
<reference key="11">
    <citation type="journal article" date="2011" name="BMC Syst. Biol.">
        <title>Initial characterization of the human central proteome.</title>
        <authorList>
            <person name="Burkard T.R."/>
            <person name="Planyavsky M."/>
            <person name="Kaupe I."/>
            <person name="Breitwieser F.P."/>
            <person name="Buerckstuemmer T."/>
            <person name="Bennett K.L."/>
            <person name="Superti-Furga G."/>
            <person name="Colinge J."/>
        </authorList>
    </citation>
    <scope>IDENTIFICATION BY MASS SPECTROMETRY [LARGE SCALE ANALYSIS]</scope>
</reference>
<reference key="12">
    <citation type="journal article" date="2011" name="Sci. Signal.">
        <title>System-wide temporal characterization of the proteome and phosphoproteome of human embryonic stem cell differentiation.</title>
        <authorList>
            <person name="Rigbolt K.T."/>
            <person name="Prokhorova T.A."/>
            <person name="Akimov V."/>
            <person name="Henningsen J."/>
            <person name="Johansen P.T."/>
            <person name="Kratchmarova I."/>
            <person name="Kassem M."/>
            <person name="Mann M."/>
            <person name="Olsen J.V."/>
            <person name="Blagoev B."/>
        </authorList>
    </citation>
    <scope>ACETYLATION [LARGE SCALE ANALYSIS] AT SER-2</scope>
    <scope>PHOSPHORYLATION [LARGE SCALE ANALYSIS] AT SER-2</scope>
    <scope>CLEAVAGE OF INITIATOR METHIONINE [LARGE SCALE ANALYSIS]</scope>
    <scope>IDENTIFICATION BY MASS SPECTROMETRY [LARGE SCALE ANALYSIS]</scope>
</reference>
<reference key="13">
    <citation type="journal article" date="2012" name="Proc. Natl. Acad. Sci. U.S.A.">
        <title>N-terminal acetylome analyses and functional insights of the N-terminal acetyltransferase NatB.</title>
        <authorList>
            <person name="Van Damme P."/>
            <person name="Lasa M."/>
            <person name="Polevoda B."/>
            <person name="Gazquez C."/>
            <person name="Elosegui-Artola A."/>
            <person name="Kim D.S."/>
            <person name="De Juan-Pardo E."/>
            <person name="Demeyer K."/>
            <person name="Hole K."/>
            <person name="Larrea E."/>
            <person name="Timmerman E."/>
            <person name="Prieto J."/>
            <person name="Arnesen T."/>
            <person name="Sherman F."/>
            <person name="Gevaert K."/>
            <person name="Aldabe R."/>
        </authorList>
    </citation>
    <scope>ACETYLATION [LARGE SCALE ANALYSIS] AT SER-2</scope>
    <scope>CLEAVAGE OF INITIATOR METHIONINE [LARGE SCALE ANALYSIS]</scope>
    <scope>IDENTIFICATION BY MASS SPECTROMETRY [LARGE SCALE ANALYSIS]</scope>
</reference>
<reference key="14">
    <citation type="journal article" date="2013" name="J. Proteome Res.">
        <title>Toward a comprehensive characterization of a human cancer cell phosphoproteome.</title>
        <authorList>
            <person name="Zhou H."/>
            <person name="Di Palma S."/>
            <person name="Preisinger C."/>
            <person name="Peng M."/>
            <person name="Polat A.N."/>
            <person name="Heck A.J."/>
            <person name="Mohammed S."/>
        </authorList>
    </citation>
    <scope>IDENTIFICATION BY MASS SPECTROMETRY [LARGE SCALE ANALYSIS]</scope>
    <source>
        <tissue>Cervix carcinoma</tissue>
        <tissue>Erythroleukemia</tissue>
    </source>
</reference>
<reference key="15">
    <citation type="journal article" date="2015" name="Proteomics">
        <title>N-terminome analysis of the human mitochondrial proteome.</title>
        <authorList>
            <person name="Vaca Jacome A.S."/>
            <person name="Rabilloud T."/>
            <person name="Schaeffer-Reiss C."/>
            <person name="Rompais M."/>
            <person name="Ayoub D."/>
            <person name="Lane L."/>
            <person name="Bairoch A."/>
            <person name="Van Dorsselaer A."/>
            <person name="Carapito C."/>
        </authorList>
    </citation>
    <scope>ACETYLATION [LARGE SCALE ANALYSIS] AT SER-2</scope>
    <scope>CLEAVAGE OF INITIATOR METHIONINE [LARGE SCALE ANALYSIS]</scope>
    <scope>IDENTIFICATION BY MASS SPECTROMETRY [LARGE SCALE ANALYSIS]</scope>
</reference>
<organism>
    <name type="scientific">Homo sapiens</name>
    <name type="common">Human</name>
    <dbReference type="NCBI Taxonomy" id="9606"/>
    <lineage>
        <taxon>Eukaryota</taxon>
        <taxon>Metazoa</taxon>
        <taxon>Chordata</taxon>
        <taxon>Craniata</taxon>
        <taxon>Vertebrata</taxon>
        <taxon>Euteleostomi</taxon>
        <taxon>Mammalia</taxon>
        <taxon>Eutheria</taxon>
        <taxon>Euarchontoglires</taxon>
        <taxon>Primates</taxon>
        <taxon>Haplorrhini</taxon>
        <taxon>Catarrhini</taxon>
        <taxon>Hominidae</taxon>
        <taxon>Homo</taxon>
    </lineage>
</organism>
<keyword id="KW-0007">Acetylation</keyword>
<keyword id="KW-1003">Cell membrane</keyword>
<keyword id="KW-0903">Direct protein sequencing</keyword>
<keyword id="KW-0449">Lipoprotein</keyword>
<keyword id="KW-0472">Membrane</keyword>
<keyword id="KW-0488">Methylation</keyword>
<keyword id="KW-0597">Phosphoprotein</keyword>
<keyword id="KW-0636">Prenylation</keyword>
<keyword id="KW-1267">Proteomics identification</keyword>
<keyword id="KW-1185">Reference proteome</keyword>
<keyword id="KW-0807">Transducer</keyword>